<feature type="transit peptide" description="Mitochondrion" evidence="2">
    <location>
        <begin position="1"/>
        <end position="60"/>
    </location>
</feature>
<feature type="chain" id="PRO_0000030677" description="Cytochrome b-c1 complex subunit Rieske-2, mitochondrial">
    <location>
        <begin position="61"/>
        <end position="272"/>
    </location>
</feature>
<feature type="topological domain" description="Mitochondrial matrix" evidence="4">
    <location>
        <begin position="61"/>
        <end position="109"/>
    </location>
</feature>
<feature type="transmembrane region" description="Helical" evidence="2">
    <location>
        <begin position="110"/>
        <end position="132"/>
    </location>
</feature>
<feature type="topological domain" description="Mitochondrial intermembrane" evidence="4">
    <location>
        <begin position="133"/>
        <end position="272"/>
    </location>
</feature>
<feature type="domain" description="Rieske" evidence="3">
    <location>
        <begin position="182"/>
        <end position="270"/>
    </location>
</feature>
<feature type="binding site" evidence="3">
    <location>
        <position position="215"/>
    </location>
    <ligand>
        <name>[2Fe-2S] cluster</name>
        <dbReference type="ChEBI" id="CHEBI:190135"/>
    </ligand>
</feature>
<feature type="binding site" evidence="3">
    <location>
        <position position="217"/>
    </location>
    <ligand>
        <name>[2Fe-2S] cluster</name>
        <dbReference type="ChEBI" id="CHEBI:190135"/>
    </ligand>
</feature>
<feature type="binding site" evidence="3">
    <location>
        <position position="234"/>
    </location>
    <ligand>
        <name>[2Fe-2S] cluster</name>
        <dbReference type="ChEBI" id="CHEBI:190135"/>
    </ligand>
</feature>
<feature type="binding site" evidence="3">
    <location>
        <position position="237"/>
    </location>
    <ligand>
        <name>[2Fe-2S] cluster</name>
        <dbReference type="ChEBI" id="CHEBI:190135"/>
    </ligand>
</feature>
<feature type="disulfide bond" evidence="3">
    <location>
        <begin position="220"/>
        <end position="236"/>
    </location>
</feature>
<proteinExistence type="evidence at transcript level"/>
<dbReference type="EC" id="7.1.1.8"/>
<dbReference type="EMBL" id="L16810">
    <property type="protein sequence ID" value="AAA20831.1"/>
    <property type="molecule type" value="mRNA"/>
</dbReference>
<dbReference type="PIR" id="T02027">
    <property type="entry name" value="T02027"/>
</dbReference>
<dbReference type="RefSeq" id="XP_016463094.1">
    <property type="nucleotide sequence ID" value="XM_016607608.1"/>
</dbReference>
<dbReference type="SMR" id="P51132"/>
<dbReference type="STRING" id="4097.P51132"/>
<dbReference type="PaxDb" id="4097-P51132"/>
<dbReference type="OMA" id="ASINWTC"/>
<dbReference type="OrthoDB" id="1637982at2759"/>
<dbReference type="PhylomeDB" id="P51132"/>
<dbReference type="Proteomes" id="UP000084051">
    <property type="component" value="Unplaced"/>
</dbReference>
<dbReference type="GO" id="GO:0005743">
    <property type="term" value="C:mitochondrial inner membrane"/>
    <property type="evidence" value="ECO:0007669"/>
    <property type="project" value="UniProtKB-SubCell"/>
</dbReference>
<dbReference type="GO" id="GO:0045275">
    <property type="term" value="C:respiratory chain complex III"/>
    <property type="evidence" value="ECO:0000318"/>
    <property type="project" value="GO_Central"/>
</dbReference>
<dbReference type="GO" id="GO:0051537">
    <property type="term" value="F:2 iron, 2 sulfur cluster binding"/>
    <property type="evidence" value="ECO:0007669"/>
    <property type="project" value="UniProtKB-KW"/>
</dbReference>
<dbReference type="GO" id="GO:0046872">
    <property type="term" value="F:metal ion binding"/>
    <property type="evidence" value="ECO:0007669"/>
    <property type="project" value="UniProtKB-KW"/>
</dbReference>
<dbReference type="GO" id="GO:0016491">
    <property type="term" value="F:oxidoreductase activity"/>
    <property type="evidence" value="ECO:0000318"/>
    <property type="project" value="GO_Central"/>
</dbReference>
<dbReference type="GO" id="GO:0008121">
    <property type="term" value="F:ubiquinol-cytochrome-c reductase activity"/>
    <property type="evidence" value="ECO:0007669"/>
    <property type="project" value="UniProtKB-EC"/>
</dbReference>
<dbReference type="GO" id="GO:0006122">
    <property type="term" value="P:mitochondrial electron transport, ubiquinol to cytochrome c"/>
    <property type="evidence" value="ECO:0000318"/>
    <property type="project" value="GO_Central"/>
</dbReference>
<dbReference type="CDD" id="cd03470">
    <property type="entry name" value="Rieske_cytochrome_bc1"/>
    <property type="match status" value="1"/>
</dbReference>
<dbReference type="FunFam" id="2.102.10.10:FF:000001">
    <property type="entry name" value="Cytochrome b-c1 complex subunit Rieske, mitochondrial"/>
    <property type="match status" value="1"/>
</dbReference>
<dbReference type="Gene3D" id="2.102.10.10">
    <property type="entry name" value="Rieske [2Fe-2S] iron-sulphur domain"/>
    <property type="match status" value="1"/>
</dbReference>
<dbReference type="InterPro" id="IPR017941">
    <property type="entry name" value="Rieske_2Fe-2S"/>
</dbReference>
<dbReference type="InterPro" id="IPR036922">
    <property type="entry name" value="Rieske_2Fe-2S_sf"/>
</dbReference>
<dbReference type="InterPro" id="IPR014349">
    <property type="entry name" value="Rieske_Fe-S_prot"/>
</dbReference>
<dbReference type="InterPro" id="IPR005805">
    <property type="entry name" value="Rieske_Fe-S_prot_C"/>
</dbReference>
<dbReference type="InterPro" id="IPR004192">
    <property type="entry name" value="Rieske_TM"/>
</dbReference>
<dbReference type="InterPro" id="IPR006317">
    <property type="entry name" value="Ubiquinol_cyt_c_Rdtase_Fe-S-su"/>
</dbReference>
<dbReference type="NCBIfam" id="TIGR01416">
    <property type="entry name" value="Rieske_proteo"/>
    <property type="match status" value="1"/>
</dbReference>
<dbReference type="PANTHER" id="PTHR10134">
    <property type="entry name" value="CYTOCHROME B-C1 COMPLEX SUBUNIT RIESKE, MITOCHONDRIAL"/>
    <property type="match status" value="1"/>
</dbReference>
<dbReference type="Pfam" id="PF00355">
    <property type="entry name" value="Rieske"/>
    <property type="match status" value="1"/>
</dbReference>
<dbReference type="Pfam" id="PF02921">
    <property type="entry name" value="UCR_TM"/>
    <property type="match status" value="1"/>
</dbReference>
<dbReference type="PRINTS" id="PR00162">
    <property type="entry name" value="RIESKE"/>
</dbReference>
<dbReference type="SUPFAM" id="SSF50022">
    <property type="entry name" value="ISP domain"/>
    <property type="match status" value="1"/>
</dbReference>
<dbReference type="SUPFAM" id="SSF81502">
    <property type="entry name" value="ISP transmembrane anchor"/>
    <property type="match status" value="1"/>
</dbReference>
<dbReference type="PROSITE" id="PS51296">
    <property type="entry name" value="RIESKE"/>
    <property type="match status" value="1"/>
</dbReference>
<evidence type="ECO:0000250" key="1">
    <source>
        <dbReference type="UniProtKB" id="P08067"/>
    </source>
</evidence>
<evidence type="ECO:0000255" key="2"/>
<evidence type="ECO:0000255" key="3">
    <source>
        <dbReference type="PROSITE-ProRule" id="PRU00628"/>
    </source>
</evidence>
<evidence type="ECO:0000305" key="4"/>
<reference key="1">
    <citation type="journal article" date="1994" name="Plant Cell">
        <title>Flower-enhanced expression of a nuclear-encoded mitochondrial respiratory protein is associated with changes in mitochondrion number.</title>
        <authorList>
            <person name="Huang J."/>
            <person name="Struck F."/>
            <person name="Matzinger D.F."/>
            <person name="Levings C.S. III"/>
        </authorList>
    </citation>
    <scope>NUCLEOTIDE SEQUENCE [MRNA]</scope>
    <source>
        <strain>cv. SC58</strain>
        <tissue>Flower</tissue>
    </source>
</reference>
<keyword id="KW-0001">2Fe-2S</keyword>
<keyword id="KW-1015">Disulfide bond</keyword>
<keyword id="KW-0249">Electron transport</keyword>
<keyword id="KW-0408">Iron</keyword>
<keyword id="KW-0411">Iron-sulfur</keyword>
<keyword id="KW-0472">Membrane</keyword>
<keyword id="KW-0479">Metal-binding</keyword>
<keyword id="KW-0496">Mitochondrion</keyword>
<keyword id="KW-0999">Mitochondrion inner membrane</keyword>
<keyword id="KW-1185">Reference proteome</keyword>
<keyword id="KW-0679">Respiratory chain</keyword>
<keyword id="KW-0809">Transit peptide</keyword>
<keyword id="KW-1278">Translocase</keyword>
<keyword id="KW-0812">Transmembrane</keyword>
<keyword id="KW-1133">Transmembrane helix</keyword>
<keyword id="KW-0813">Transport</keyword>
<name>UCRI2_TOBAC</name>
<accession>P51132</accession>
<comment type="function">
    <text evidence="1">Component of the ubiquinol-cytochrome c oxidoreductase, a multisubunit transmembrane complex that is part of the mitochondrial electron transport chain which drives oxidative phosphorylation. The respiratory chain contains 3 multisubunit complexes succinate dehydrogenase (complex II, CII), ubiquinol-cytochrome c oxidoreductase (cytochrome b-c1 complex, complex III, CIII) and cytochrome c oxidase (complex IV, CIV), that cooperate to transfer electrons derived from NADH and succinate to molecular oxygen, creating an electrochemical gradient over the inner membrane that drives transmembrane transport and the ATP synthase. The cytochrome b-c1 complex catalyzes electron transfer from ubiquinol to cytochrome c, linking this redox reaction to translocation of protons across the mitochondrial inner membrane, with protons being carried across the membrane as hydrogens on the quinol. In the process called Q cycle, 2 protons are consumed from the matrix, 4 protons are released into the intermembrane space and 2 electrons are passed to cytochrome c. The Rieske protein is a catalytic core subunit containing a [2Fe-2S] iron-sulfur cluster. It cycles between 2 conformational states during catalysis to transfer electrons from the quinol bound in the Q(0) site in cytochrome b to cytochrome c1.</text>
</comment>
<comment type="catalytic activity">
    <reaction evidence="1">
        <text>a quinol + 2 Fe(III)-[cytochrome c](out) = a quinone + 2 Fe(II)-[cytochrome c](out) + 2 H(+)(out)</text>
        <dbReference type="Rhea" id="RHEA:11484"/>
        <dbReference type="Rhea" id="RHEA-COMP:10350"/>
        <dbReference type="Rhea" id="RHEA-COMP:14399"/>
        <dbReference type="ChEBI" id="CHEBI:15378"/>
        <dbReference type="ChEBI" id="CHEBI:24646"/>
        <dbReference type="ChEBI" id="CHEBI:29033"/>
        <dbReference type="ChEBI" id="CHEBI:29034"/>
        <dbReference type="ChEBI" id="CHEBI:132124"/>
        <dbReference type="EC" id="7.1.1.8"/>
    </reaction>
</comment>
<comment type="cofactor">
    <cofactor evidence="3">
        <name>[2Fe-2S] cluster</name>
        <dbReference type="ChEBI" id="CHEBI:190135"/>
    </cofactor>
    <text evidence="3">Binds 1 [2Fe-2S] cluster per subunit.</text>
</comment>
<comment type="subunit">
    <text evidence="1">Component of the ubiquinol-cytochrome c oxidoreductase (cytochrome b-c1 complex, complex III, CIII), a multisubunit enzyme composed of 3 respiratory subunits cytochrome b, cytochrome c1 and Rieske protein, 2 core protein subunits, and several low-molecular weight protein subunits. The complex exists as an obligatory dimer and forms supercomplexes (SCs) in the inner mitochondrial membrane with cytochrome c oxidase (complex IV, CIV).</text>
</comment>
<comment type="subcellular location">
    <subcellularLocation>
        <location evidence="1">Mitochondrion inner membrane</location>
        <topology evidence="1">Single-pass membrane protein</topology>
    </subcellularLocation>
</comment>
<comment type="tissue specificity">
    <text>High levels are seen in the flowers while a low level expression is seen in the roots, leaves and stems.</text>
</comment>
<comment type="miscellaneous">
    <text>The Rieske protein is a high potential 2Fe-2S protein.</text>
</comment>
<comment type="similarity">
    <text evidence="4">Belongs to the Rieske iron-sulfur protein family.</text>
</comment>
<organism>
    <name type="scientific">Nicotiana tabacum</name>
    <name type="common">Common tobacco</name>
    <dbReference type="NCBI Taxonomy" id="4097"/>
    <lineage>
        <taxon>Eukaryota</taxon>
        <taxon>Viridiplantae</taxon>
        <taxon>Streptophyta</taxon>
        <taxon>Embryophyta</taxon>
        <taxon>Tracheophyta</taxon>
        <taxon>Spermatophyta</taxon>
        <taxon>Magnoliopsida</taxon>
        <taxon>eudicotyledons</taxon>
        <taxon>Gunneridae</taxon>
        <taxon>Pentapetalae</taxon>
        <taxon>asterids</taxon>
        <taxon>lamiids</taxon>
        <taxon>Solanales</taxon>
        <taxon>Solanaceae</taxon>
        <taxon>Nicotianoideae</taxon>
        <taxon>Nicotianeae</taxon>
        <taxon>Nicotiana</taxon>
    </lineage>
</organism>
<sequence length="272" mass="29784">MLRIAGRRASSLSRWPVRSVAPSSSAFISANHFSSDDDSSSPRSISPSLASVFLHHTRGFSSNSVSHAHDMGLVPDLPPTVAAIKNPTSKIVYDEHNHERYPPGDPSKRAFAYFVLTGGRFVYASLVRLLILKFVLSMSASKDVLALASLEVDLSSIEPGTTVTVKWRGKPVFIRRRTEDDINLANSVDLGSLRDPQQDAERVKSPEWLVVIGVCTHLGCIPLPNAGDFGGWFCPCHGSHYDISGRIRKGPAPYNLEVPTYSFLEENKLLIG</sequence>
<protein>
    <recommendedName>
        <fullName>Cytochrome b-c1 complex subunit Rieske-2, mitochondrial</fullName>
        <ecNumber>7.1.1.8</ecNumber>
    </recommendedName>
    <alternativeName>
        <fullName>Complex III subunit 5-2</fullName>
    </alternativeName>
    <alternativeName>
        <fullName>Rieske iron-sulfur protein 2</fullName>
        <shortName>RISP2</shortName>
    </alternativeName>
    <alternativeName>
        <fullName>Ubiquinol-cytochrome c reductase iron-sulfur subunit 2</fullName>
    </alternativeName>
</protein>